<sequence length="335" mass="37559">MNLAKRILQGEQLTKETVLKIYEDTNIDTLDLLNEAYILRKHYFGKKVKLNMILNAKSGICPENCGYCGQSRDIKQKQRYALIPEEQIIDGAKVAHDNHIGTYCIVMSGRGPSDKEVDHISNTVRTIKSQHPQLKICACLGLTNDEQAKKLKSAGVDRYNHNINTSENYHDNVVTTHSYKDRTDTIELMKANNISPCSGVICGMGESNQDIVDMAFALKEMDADSIPINFLHPIKGTKFGSMDDLTPMKCLRIVALFRLINPTKEIRIAGGREVNLRSLQPLALKAANSIFVGDYLITGGQPNQLDYDMINDLGFEIDYDTCENKENKNEVSRAN</sequence>
<accession>Q5HDC9</accession>
<organism>
    <name type="scientific">Staphylococcus aureus (strain COL)</name>
    <dbReference type="NCBI Taxonomy" id="93062"/>
    <lineage>
        <taxon>Bacteria</taxon>
        <taxon>Bacillati</taxon>
        <taxon>Bacillota</taxon>
        <taxon>Bacilli</taxon>
        <taxon>Bacillales</taxon>
        <taxon>Staphylococcaceae</taxon>
        <taxon>Staphylococcus</taxon>
    </lineage>
</organism>
<name>BIOB_STAAC</name>
<proteinExistence type="inferred from homology"/>
<evidence type="ECO:0000255" key="1">
    <source>
        <dbReference type="HAMAP-Rule" id="MF_01694"/>
    </source>
</evidence>
<evidence type="ECO:0000255" key="2">
    <source>
        <dbReference type="PROSITE-ProRule" id="PRU01266"/>
    </source>
</evidence>
<gene>
    <name evidence="1" type="primary">bioB</name>
    <name type="ordered locus">SACOL2426</name>
</gene>
<protein>
    <recommendedName>
        <fullName evidence="1">Biotin synthase</fullName>
        <ecNumber evidence="1">2.8.1.6</ecNumber>
    </recommendedName>
</protein>
<keyword id="KW-0001">2Fe-2S</keyword>
<keyword id="KW-0004">4Fe-4S</keyword>
<keyword id="KW-0093">Biotin biosynthesis</keyword>
<keyword id="KW-0408">Iron</keyword>
<keyword id="KW-0411">Iron-sulfur</keyword>
<keyword id="KW-0479">Metal-binding</keyword>
<keyword id="KW-0949">S-adenosyl-L-methionine</keyword>
<keyword id="KW-0808">Transferase</keyword>
<reference key="1">
    <citation type="journal article" date="2005" name="J. Bacteriol.">
        <title>Insights on evolution of virulence and resistance from the complete genome analysis of an early methicillin-resistant Staphylococcus aureus strain and a biofilm-producing methicillin-resistant Staphylococcus epidermidis strain.</title>
        <authorList>
            <person name="Gill S.R."/>
            <person name="Fouts D.E."/>
            <person name="Archer G.L."/>
            <person name="Mongodin E.F."/>
            <person name="DeBoy R.T."/>
            <person name="Ravel J."/>
            <person name="Paulsen I.T."/>
            <person name="Kolonay J.F."/>
            <person name="Brinkac L.M."/>
            <person name="Beanan M.J."/>
            <person name="Dodson R.J."/>
            <person name="Daugherty S.C."/>
            <person name="Madupu R."/>
            <person name="Angiuoli S.V."/>
            <person name="Durkin A.S."/>
            <person name="Haft D.H."/>
            <person name="Vamathevan J.J."/>
            <person name="Khouri H."/>
            <person name="Utterback T.R."/>
            <person name="Lee C."/>
            <person name="Dimitrov G."/>
            <person name="Jiang L."/>
            <person name="Qin H."/>
            <person name="Weidman J."/>
            <person name="Tran K."/>
            <person name="Kang K.H."/>
            <person name="Hance I.R."/>
            <person name="Nelson K.E."/>
            <person name="Fraser C.M."/>
        </authorList>
    </citation>
    <scope>NUCLEOTIDE SEQUENCE [LARGE SCALE GENOMIC DNA]</scope>
    <source>
        <strain>COL</strain>
    </source>
</reference>
<feature type="chain" id="PRO_0000381648" description="Biotin synthase">
    <location>
        <begin position="1"/>
        <end position="335"/>
    </location>
</feature>
<feature type="domain" description="Radical SAM core" evidence="2">
    <location>
        <begin position="43"/>
        <end position="269"/>
    </location>
</feature>
<feature type="binding site" evidence="1">
    <location>
        <position position="61"/>
    </location>
    <ligand>
        <name>[4Fe-4S] cluster</name>
        <dbReference type="ChEBI" id="CHEBI:49883"/>
        <note>4Fe-4S-S-AdoMet</note>
    </ligand>
</feature>
<feature type="binding site" evidence="1">
    <location>
        <position position="65"/>
    </location>
    <ligand>
        <name>[4Fe-4S] cluster</name>
        <dbReference type="ChEBI" id="CHEBI:49883"/>
        <note>4Fe-4S-S-AdoMet</note>
    </ligand>
</feature>
<feature type="binding site" evidence="1">
    <location>
        <position position="68"/>
    </location>
    <ligand>
        <name>[4Fe-4S] cluster</name>
        <dbReference type="ChEBI" id="CHEBI:49883"/>
        <note>4Fe-4S-S-AdoMet</note>
    </ligand>
</feature>
<feature type="binding site" evidence="1">
    <location>
        <position position="104"/>
    </location>
    <ligand>
        <name>[2Fe-2S] cluster</name>
        <dbReference type="ChEBI" id="CHEBI:190135"/>
    </ligand>
</feature>
<feature type="binding site" evidence="1">
    <location>
        <position position="137"/>
    </location>
    <ligand>
        <name>[2Fe-2S] cluster</name>
        <dbReference type="ChEBI" id="CHEBI:190135"/>
    </ligand>
</feature>
<feature type="binding site" evidence="1">
    <location>
        <position position="197"/>
    </location>
    <ligand>
        <name>[2Fe-2S] cluster</name>
        <dbReference type="ChEBI" id="CHEBI:190135"/>
    </ligand>
</feature>
<feature type="binding site" evidence="1">
    <location>
        <position position="267"/>
    </location>
    <ligand>
        <name>[2Fe-2S] cluster</name>
        <dbReference type="ChEBI" id="CHEBI:190135"/>
    </ligand>
</feature>
<comment type="function">
    <text evidence="1">Catalyzes the conversion of dethiobiotin (DTB) to biotin by the insertion of a sulfur atom into dethiobiotin via a radical-based mechanism.</text>
</comment>
<comment type="catalytic activity">
    <reaction evidence="1">
        <text>(4R,5S)-dethiobiotin + (sulfur carrier)-SH + 2 reduced [2Fe-2S]-[ferredoxin] + 2 S-adenosyl-L-methionine = (sulfur carrier)-H + biotin + 2 5'-deoxyadenosine + 2 L-methionine + 2 oxidized [2Fe-2S]-[ferredoxin]</text>
        <dbReference type="Rhea" id="RHEA:22060"/>
        <dbReference type="Rhea" id="RHEA-COMP:10000"/>
        <dbReference type="Rhea" id="RHEA-COMP:10001"/>
        <dbReference type="Rhea" id="RHEA-COMP:14737"/>
        <dbReference type="Rhea" id="RHEA-COMP:14739"/>
        <dbReference type="ChEBI" id="CHEBI:17319"/>
        <dbReference type="ChEBI" id="CHEBI:29917"/>
        <dbReference type="ChEBI" id="CHEBI:33737"/>
        <dbReference type="ChEBI" id="CHEBI:33738"/>
        <dbReference type="ChEBI" id="CHEBI:57586"/>
        <dbReference type="ChEBI" id="CHEBI:57844"/>
        <dbReference type="ChEBI" id="CHEBI:59789"/>
        <dbReference type="ChEBI" id="CHEBI:64428"/>
        <dbReference type="ChEBI" id="CHEBI:149473"/>
        <dbReference type="EC" id="2.8.1.6"/>
    </reaction>
</comment>
<comment type="cofactor">
    <cofactor evidence="1">
        <name>[4Fe-4S] cluster</name>
        <dbReference type="ChEBI" id="CHEBI:49883"/>
    </cofactor>
    <text evidence="1">Binds 1 [4Fe-4S] cluster. The cluster is coordinated with 3 cysteines and an exchangeable S-adenosyl-L-methionine.</text>
</comment>
<comment type="cofactor">
    <cofactor evidence="1">
        <name>[2Fe-2S] cluster</name>
        <dbReference type="ChEBI" id="CHEBI:190135"/>
    </cofactor>
    <text evidence="1">Binds 1 [2Fe-2S] cluster. The cluster is coordinated with 3 cysteines and 1 arginine.</text>
</comment>
<comment type="pathway">
    <text evidence="1">Cofactor biosynthesis; biotin biosynthesis; biotin from 7,8-diaminononanoate: step 2/2.</text>
</comment>
<comment type="subunit">
    <text evidence="1">Homodimer.</text>
</comment>
<comment type="similarity">
    <text evidence="1">Belongs to the radical SAM superfamily. Biotin synthase family.</text>
</comment>
<dbReference type="EC" id="2.8.1.6" evidence="1"/>
<dbReference type="EMBL" id="CP000046">
    <property type="protein sequence ID" value="AAW37250.1"/>
    <property type="molecule type" value="Genomic_DNA"/>
</dbReference>
<dbReference type="RefSeq" id="WP_001046646.1">
    <property type="nucleotide sequence ID" value="NZ_JBGOFO010000004.1"/>
</dbReference>
<dbReference type="SMR" id="Q5HDC9"/>
<dbReference type="KEGG" id="sac:SACOL2426"/>
<dbReference type="HOGENOM" id="CLU_033172_2_1_9"/>
<dbReference type="UniPathway" id="UPA00078">
    <property type="reaction ID" value="UER00162"/>
</dbReference>
<dbReference type="Proteomes" id="UP000000530">
    <property type="component" value="Chromosome"/>
</dbReference>
<dbReference type="GO" id="GO:0051537">
    <property type="term" value="F:2 iron, 2 sulfur cluster binding"/>
    <property type="evidence" value="ECO:0007669"/>
    <property type="project" value="UniProtKB-KW"/>
</dbReference>
<dbReference type="GO" id="GO:0051539">
    <property type="term" value="F:4 iron, 4 sulfur cluster binding"/>
    <property type="evidence" value="ECO:0007669"/>
    <property type="project" value="UniProtKB-KW"/>
</dbReference>
<dbReference type="GO" id="GO:0004076">
    <property type="term" value="F:biotin synthase activity"/>
    <property type="evidence" value="ECO:0007669"/>
    <property type="project" value="UniProtKB-UniRule"/>
</dbReference>
<dbReference type="GO" id="GO:0005506">
    <property type="term" value="F:iron ion binding"/>
    <property type="evidence" value="ECO:0007669"/>
    <property type="project" value="UniProtKB-UniRule"/>
</dbReference>
<dbReference type="GO" id="GO:0009102">
    <property type="term" value="P:biotin biosynthetic process"/>
    <property type="evidence" value="ECO:0007669"/>
    <property type="project" value="UniProtKB-UniRule"/>
</dbReference>
<dbReference type="CDD" id="cd01335">
    <property type="entry name" value="Radical_SAM"/>
    <property type="match status" value="1"/>
</dbReference>
<dbReference type="FunFam" id="3.20.20.70:FF:000026">
    <property type="entry name" value="Biotin synthase"/>
    <property type="match status" value="1"/>
</dbReference>
<dbReference type="Gene3D" id="3.20.20.70">
    <property type="entry name" value="Aldolase class I"/>
    <property type="match status" value="1"/>
</dbReference>
<dbReference type="HAMAP" id="MF_01694">
    <property type="entry name" value="BioB"/>
    <property type="match status" value="1"/>
</dbReference>
<dbReference type="InterPro" id="IPR013785">
    <property type="entry name" value="Aldolase_TIM"/>
</dbReference>
<dbReference type="InterPro" id="IPR010722">
    <property type="entry name" value="BATS_dom"/>
</dbReference>
<dbReference type="InterPro" id="IPR002684">
    <property type="entry name" value="Biotin_synth/BioAB"/>
</dbReference>
<dbReference type="InterPro" id="IPR024177">
    <property type="entry name" value="Biotin_synthase"/>
</dbReference>
<dbReference type="InterPro" id="IPR006638">
    <property type="entry name" value="Elp3/MiaA/NifB-like_rSAM"/>
</dbReference>
<dbReference type="InterPro" id="IPR007197">
    <property type="entry name" value="rSAM"/>
</dbReference>
<dbReference type="NCBIfam" id="TIGR00433">
    <property type="entry name" value="bioB"/>
    <property type="match status" value="1"/>
</dbReference>
<dbReference type="PANTHER" id="PTHR22976">
    <property type="entry name" value="BIOTIN SYNTHASE"/>
    <property type="match status" value="1"/>
</dbReference>
<dbReference type="PANTHER" id="PTHR22976:SF2">
    <property type="entry name" value="BIOTIN SYNTHASE, MITOCHONDRIAL"/>
    <property type="match status" value="1"/>
</dbReference>
<dbReference type="Pfam" id="PF06968">
    <property type="entry name" value="BATS"/>
    <property type="match status" value="1"/>
</dbReference>
<dbReference type="Pfam" id="PF04055">
    <property type="entry name" value="Radical_SAM"/>
    <property type="match status" value="1"/>
</dbReference>
<dbReference type="PIRSF" id="PIRSF001619">
    <property type="entry name" value="Biotin_synth"/>
    <property type="match status" value="1"/>
</dbReference>
<dbReference type="SFLD" id="SFLDG01060">
    <property type="entry name" value="BATS_domain_containing"/>
    <property type="match status" value="1"/>
</dbReference>
<dbReference type="SFLD" id="SFLDG01278">
    <property type="entry name" value="biotin_synthase_like"/>
    <property type="match status" value="1"/>
</dbReference>
<dbReference type="SMART" id="SM00876">
    <property type="entry name" value="BATS"/>
    <property type="match status" value="1"/>
</dbReference>
<dbReference type="SMART" id="SM00729">
    <property type="entry name" value="Elp3"/>
    <property type="match status" value="1"/>
</dbReference>
<dbReference type="SUPFAM" id="SSF102114">
    <property type="entry name" value="Radical SAM enzymes"/>
    <property type="match status" value="1"/>
</dbReference>
<dbReference type="PROSITE" id="PS51918">
    <property type="entry name" value="RADICAL_SAM"/>
    <property type="match status" value="1"/>
</dbReference>